<gene>
    <name evidence="1" type="primary">pgi1</name>
    <name type="ordered locus">RHA1_ro05567</name>
</gene>
<dbReference type="EC" id="5.3.1.9" evidence="1"/>
<dbReference type="EMBL" id="CP000431">
    <property type="protein sequence ID" value="ABG97347.1"/>
    <property type="molecule type" value="Genomic_DNA"/>
</dbReference>
<dbReference type="RefSeq" id="WP_011597733.1">
    <property type="nucleotide sequence ID" value="NC_008268.1"/>
</dbReference>
<dbReference type="SMR" id="Q0S539"/>
<dbReference type="KEGG" id="rha:RHA1_ro05567"/>
<dbReference type="PATRIC" id="fig|101510.16.peg.5611"/>
<dbReference type="eggNOG" id="COG0166">
    <property type="taxonomic scope" value="Bacteria"/>
</dbReference>
<dbReference type="HOGENOM" id="CLU_017947_3_1_11"/>
<dbReference type="OrthoDB" id="140919at2"/>
<dbReference type="UniPathway" id="UPA00109">
    <property type="reaction ID" value="UER00181"/>
</dbReference>
<dbReference type="UniPathway" id="UPA00138"/>
<dbReference type="Proteomes" id="UP000008710">
    <property type="component" value="Chromosome"/>
</dbReference>
<dbReference type="GO" id="GO:0005829">
    <property type="term" value="C:cytosol"/>
    <property type="evidence" value="ECO:0007669"/>
    <property type="project" value="TreeGrafter"/>
</dbReference>
<dbReference type="GO" id="GO:0097367">
    <property type="term" value="F:carbohydrate derivative binding"/>
    <property type="evidence" value="ECO:0007669"/>
    <property type="project" value="InterPro"/>
</dbReference>
<dbReference type="GO" id="GO:0004347">
    <property type="term" value="F:glucose-6-phosphate isomerase activity"/>
    <property type="evidence" value="ECO:0007669"/>
    <property type="project" value="UniProtKB-UniRule"/>
</dbReference>
<dbReference type="GO" id="GO:0048029">
    <property type="term" value="F:monosaccharide binding"/>
    <property type="evidence" value="ECO:0007669"/>
    <property type="project" value="TreeGrafter"/>
</dbReference>
<dbReference type="GO" id="GO:0006094">
    <property type="term" value="P:gluconeogenesis"/>
    <property type="evidence" value="ECO:0007669"/>
    <property type="project" value="UniProtKB-UniRule"/>
</dbReference>
<dbReference type="GO" id="GO:0051156">
    <property type="term" value="P:glucose 6-phosphate metabolic process"/>
    <property type="evidence" value="ECO:0007669"/>
    <property type="project" value="TreeGrafter"/>
</dbReference>
<dbReference type="GO" id="GO:0006096">
    <property type="term" value="P:glycolytic process"/>
    <property type="evidence" value="ECO:0007669"/>
    <property type="project" value="UniProtKB-UniRule"/>
</dbReference>
<dbReference type="CDD" id="cd05015">
    <property type="entry name" value="SIS_PGI_1"/>
    <property type="match status" value="1"/>
</dbReference>
<dbReference type="CDD" id="cd05016">
    <property type="entry name" value="SIS_PGI_2"/>
    <property type="match status" value="1"/>
</dbReference>
<dbReference type="FunFam" id="3.40.50.10490:FF:000018">
    <property type="entry name" value="Glucose-6-phosphate isomerase"/>
    <property type="match status" value="1"/>
</dbReference>
<dbReference type="Gene3D" id="1.10.1390.10">
    <property type="match status" value="1"/>
</dbReference>
<dbReference type="Gene3D" id="3.40.50.10490">
    <property type="entry name" value="Glucose-6-phosphate isomerase like protein, domain 1"/>
    <property type="match status" value="2"/>
</dbReference>
<dbReference type="HAMAP" id="MF_00473">
    <property type="entry name" value="G6P_isomerase"/>
    <property type="match status" value="1"/>
</dbReference>
<dbReference type="InterPro" id="IPR001672">
    <property type="entry name" value="G6P_Isomerase"/>
</dbReference>
<dbReference type="InterPro" id="IPR023096">
    <property type="entry name" value="G6P_Isomerase_C"/>
</dbReference>
<dbReference type="InterPro" id="IPR018189">
    <property type="entry name" value="Phosphoglucose_isomerase_CS"/>
</dbReference>
<dbReference type="InterPro" id="IPR046348">
    <property type="entry name" value="SIS_dom_sf"/>
</dbReference>
<dbReference type="InterPro" id="IPR035476">
    <property type="entry name" value="SIS_PGI_1"/>
</dbReference>
<dbReference type="InterPro" id="IPR035482">
    <property type="entry name" value="SIS_PGI_2"/>
</dbReference>
<dbReference type="NCBIfam" id="NF001211">
    <property type="entry name" value="PRK00179.1"/>
    <property type="match status" value="1"/>
</dbReference>
<dbReference type="PANTHER" id="PTHR11469">
    <property type="entry name" value="GLUCOSE-6-PHOSPHATE ISOMERASE"/>
    <property type="match status" value="1"/>
</dbReference>
<dbReference type="PANTHER" id="PTHR11469:SF1">
    <property type="entry name" value="GLUCOSE-6-PHOSPHATE ISOMERASE"/>
    <property type="match status" value="1"/>
</dbReference>
<dbReference type="Pfam" id="PF00342">
    <property type="entry name" value="PGI"/>
    <property type="match status" value="1"/>
</dbReference>
<dbReference type="PRINTS" id="PR00662">
    <property type="entry name" value="G6PISOMERASE"/>
</dbReference>
<dbReference type="SUPFAM" id="SSF53697">
    <property type="entry name" value="SIS domain"/>
    <property type="match status" value="1"/>
</dbReference>
<dbReference type="PROSITE" id="PS00765">
    <property type="entry name" value="P_GLUCOSE_ISOMERASE_1"/>
    <property type="match status" value="1"/>
</dbReference>
<dbReference type="PROSITE" id="PS00174">
    <property type="entry name" value="P_GLUCOSE_ISOMERASE_2"/>
    <property type="match status" value="1"/>
</dbReference>
<dbReference type="PROSITE" id="PS51463">
    <property type="entry name" value="P_GLUCOSE_ISOMERASE_3"/>
    <property type="match status" value="1"/>
</dbReference>
<organism>
    <name type="scientific">Rhodococcus jostii (strain RHA1)</name>
    <dbReference type="NCBI Taxonomy" id="101510"/>
    <lineage>
        <taxon>Bacteria</taxon>
        <taxon>Bacillati</taxon>
        <taxon>Actinomycetota</taxon>
        <taxon>Actinomycetes</taxon>
        <taxon>Mycobacteriales</taxon>
        <taxon>Nocardiaceae</taxon>
        <taxon>Rhodococcus</taxon>
    </lineage>
</organism>
<name>G6PI1_RHOJR</name>
<sequence length="550" mass="60028">MSSDITGTAAWQKLRDHHAQIQSVHLRELFEKDPARGQELTVTAGDLYIDYSKHRIDRDTLGLLLELARSADLEARRDAMFAGEHINTSEDRAVLHTALRLPADASLVVDGQDVVADVHEVLDRMGDFTDRVRSGEWRGATGERIKTVVNIGIGGSDLGPVMVYRALRHYADAGISVRFISNVDPADLVRSLQGLDPATTLFIVASKTFSTLETLTNATAARRWLLGGLGLGNEAVAKHFVAVSTHADRVAEFGIDTANMFGFWDWVGGRYSVDSAIGLSVMAAIGKERFAEFLAGFHAVDEHFRTAPLEENAPVLLGLIGLWYSNFFGAESRAVLPYSNDLVRFAAYLQQLTMESNGKSVRADGTPVPTSTGEIFWGEPGTNGQHAFYQLLHQGTRLVPSDFIGFGEPTDDLPTADGTGSMHDLLMSNFFAQTKVLAFGKTAEEIAAEGTPEHLVPHKVMPGNRPSTTILAPKLTPSVIGQLIALYEHQVFVEGVVWGIDSFDQWGVELGKTQAVELQPVLTAAEEPAAQSDSSTDSLVRWYRRQRGRA</sequence>
<reference key="1">
    <citation type="journal article" date="2006" name="Proc. Natl. Acad. Sci. U.S.A.">
        <title>The complete genome of Rhodococcus sp. RHA1 provides insights into a catabolic powerhouse.</title>
        <authorList>
            <person name="McLeod M.P."/>
            <person name="Warren R.L."/>
            <person name="Hsiao W.W.L."/>
            <person name="Araki N."/>
            <person name="Myhre M."/>
            <person name="Fernandes C."/>
            <person name="Miyazawa D."/>
            <person name="Wong W."/>
            <person name="Lillquist A.L."/>
            <person name="Wang D."/>
            <person name="Dosanjh M."/>
            <person name="Hara H."/>
            <person name="Petrescu A."/>
            <person name="Morin R.D."/>
            <person name="Yang G."/>
            <person name="Stott J.M."/>
            <person name="Schein J.E."/>
            <person name="Shin H."/>
            <person name="Smailus D."/>
            <person name="Siddiqui A.S."/>
            <person name="Marra M.A."/>
            <person name="Jones S.J.M."/>
            <person name="Holt R."/>
            <person name="Brinkman F.S.L."/>
            <person name="Miyauchi K."/>
            <person name="Fukuda M."/>
            <person name="Davies J.E."/>
            <person name="Mohn W.W."/>
            <person name="Eltis L.D."/>
        </authorList>
    </citation>
    <scope>NUCLEOTIDE SEQUENCE [LARGE SCALE GENOMIC DNA]</scope>
    <source>
        <strain>RHA1</strain>
    </source>
</reference>
<keyword id="KW-0963">Cytoplasm</keyword>
<keyword id="KW-0312">Gluconeogenesis</keyword>
<keyword id="KW-0324">Glycolysis</keyword>
<keyword id="KW-0413">Isomerase</keyword>
<comment type="function">
    <text evidence="1">Catalyzes the reversible isomerization of glucose-6-phosphate to fructose-6-phosphate.</text>
</comment>
<comment type="catalytic activity">
    <reaction evidence="1">
        <text>alpha-D-glucose 6-phosphate = beta-D-fructose 6-phosphate</text>
        <dbReference type="Rhea" id="RHEA:11816"/>
        <dbReference type="ChEBI" id="CHEBI:57634"/>
        <dbReference type="ChEBI" id="CHEBI:58225"/>
        <dbReference type="EC" id="5.3.1.9"/>
    </reaction>
</comment>
<comment type="pathway">
    <text evidence="1">Carbohydrate biosynthesis; gluconeogenesis.</text>
</comment>
<comment type="pathway">
    <text evidence="1">Carbohydrate degradation; glycolysis; D-glyceraldehyde 3-phosphate and glycerone phosphate from D-glucose: step 2/4.</text>
</comment>
<comment type="subcellular location">
    <subcellularLocation>
        <location evidence="1">Cytoplasm</location>
    </subcellularLocation>
</comment>
<comment type="similarity">
    <text evidence="1">Belongs to the GPI family.</text>
</comment>
<accession>Q0S539</accession>
<evidence type="ECO:0000255" key="1">
    <source>
        <dbReference type="HAMAP-Rule" id="MF_00473"/>
    </source>
</evidence>
<proteinExistence type="inferred from homology"/>
<feature type="chain" id="PRO_0000252637" description="Glucose-6-phosphate isomerase 1">
    <location>
        <begin position="1"/>
        <end position="550"/>
    </location>
</feature>
<feature type="active site" description="Proton donor" evidence="1">
    <location>
        <position position="355"/>
    </location>
</feature>
<feature type="active site" evidence="1">
    <location>
        <position position="386"/>
    </location>
</feature>
<feature type="active site" evidence="1">
    <location>
        <position position="512"/>
    </location>
</feature>
<protein>
    <recommendedName>
        <fullName evidence="1">Glucose-6-phosphate isomerase 1</fullName>
        <shortName evidence="1">GPI 1</shortName>
        <ecNumber evidence="1">5.3.1.9</ecNumber>
    </recommendedName>
    <alternativeName>
        <fullName evidence="1">Phosphoglucose isomerase 1</fullName>
        <shortName evidence="1">PGI 1</shortName>
    </alternativeName>
    <alternativeName>
        <fullName evidence="1">Phosphohexose isomerase 1</fullName>
        <shortName evidence="1">PHI 1</shortName>
    </alternativeName>
</protein>